<protein>
    <recommendedName>
        <fullName evidence="1">Chorismate synthase</fullName>
        <shortName evidence="1">CS</shortName>
        <ecNumber evidence="1">4.2.3.5</ecNumber>
    </recommendedName>
    <alternativeName>
        <fullName evidence="1">5-enolpyruvylshikimate-3-phosphate phospholyase</fullName>
    </alternativeName>
</protein>
<organism>
    <name type="scientific">Halorubrum lacusprofundi (strain ATCC 49239 / DSM 5036 / JCM 8891 / ACAM 34)</name>
    <dbReference type="NCBI Taxonomy" id="416348"/>
    <lineage>
        <taxon>Archaea</taxon>
        <taxon>Methanobacteriati</taxon>
        <taxon>Methanobacteriota</taxon>
        <taxon>Stenosarchaea group</taxon>
        <taxon>Halobacteria</taxon>
        <taxon>Halobacteriales</taxon>
        <taxon>Haloferacaceae</taxon>
        <taxon>Halorubrum</taxon>
    </lineage>
</organism>
<gene>
    <name evidence="1" type="primary">aroC</name>
    <name type="ordered locus">Hlac_1114</name>
</gene>
<evidence type="ECO:0000255" key="1">
    <source>
        <dbReference type="HAMAP-Rule" id="MF_00300"/>
    </source>
</evidence>
<evidence type="ECO:0000256" key="2">
    <source>
        <dbReference type="SAM" id="MobiDB-lite"/>
    </source>
</evidence>
<comment type="function">
    <text evidence="1">Catalyzes the anti-1,4-elimination of the C-3 phosphate and the C-6 proR hydrogen from 5-enolpyruvylshikimate-3-phosphate (EPSP) to yield chorismate, which is the branch point compound that serves as the starting substrate for the three terminal pathways of aromatic amino acid biosynthesis. This reaction introduces a second double bond into the aromatic ring system.</text>
</comment>
<comment type="catalytic activity">
    <reaction evidence="1">
        <text>5-O-(1-carboxyvinyl)-3-phosphoshikimate = chorismate + phosphate</text>
        <dbReference type="Rhea" id="RHEA:21020"/>
        <dbReference type="ChEBI" id="CHEBI:29748"/>
        <dbReference type="ChEBI" id="CHEBI:43474"/>
        <dbReference type="ChEBI" id="CHEBI:57701"/>
        <dbReference type="EC" id="4.2.3.5"/>
    </reaction>
</comment>
<comment type="cofactor">
    <cofactor evidence="1">
        <name>FMNH2</name>
        <dbReference type="ChEBI" id="CHEBI:57618"/>
    </cofactor>
    <text evidence="1">Reduced FMN (FMNH(2)).</text>
</comment>
<comment type="pathway">
    <text evidence="1">Metabolic intermediate biosynthesis; chorismate biosynthesis; chorismate from D-erythrose 4-phosphate and phosphoenolpyruvate: step 7/7.</text>
</comment>
<comment type="similarity">
    <text evidence="1">Belongs to the chorismate synthase family.</text>
</comment>
<accession>B9LMX0</accession>
<sequence length="395" mass="42662">MNGNRFGRLFQVTTYGESHGEAMGVTVSGVPAGVELDEEAIQAQLDRRKPGQSMITTSRGEPDEVVVNSGVQDGYTTGTPIGMVIQNKDARSGKYEPYVTAPRPSHGDYTYSAKFGTRNWGGGGRSSARETVNWVAAGAVAEQVLDASEYDVEIKAHVNQIGDVEADDVSFEQILDHSEENDVRCADPEAAAEMQELIERYQEAGDSIGGSIYFECRGVPRGLGAPRFDGFPSRLGQAMFSIPATTGVEFGLGKDAVNVTGSERNEDWTFDDGESFDHVESEEGDPVPVGNDHGGLQGGITTGEPIYGEATWHAPTSIPKKQRSADWETGEEKDVQVVGRHDPVLPPRAVPVVEAMLYCTVLDFMLLAGRINPDRVDGNPGQYDTDYHPSSPDND</sequence>
<reference key="1">
    <citation type="journal article" date="2016" name="Stand. Genomic Sci.">
        <title>Complete genome sequence of the Antarctic Halorubrum lacusprofundi type strain ACAM 34.</title>
        <authorList>
            <person name="Anderson I.J."/>
            <person name="DasSarma P."/>
            <person name="Lucas S."/>
            <person name="Copeland A."/>
            <person name="Lapidus A."/>
            <person name="Del Rio T.G."/>
            <person name="Tice H."/>
            <person name="Dalin E."/>
            <person name="Bruce D.C."/>
            <person name="Goodwin L."/>
            <person name="Pitluck S."/>
            <person name="Sims D."/>
            <person name="Brettin T.S."/>
            <person name="Detter J.C."/>
            <person name="Han C.S."/>
            <person name="Larimer F."/>
            <person name="Hauser L."/>
            <person name="Land M."/>
            <person name="Ivanova N."/>
            <person name="Richardson P."/>
            <person name="Cavicchioli R."/>
            <person name="DasSarma S."/>
            <person name="Woese C.R."/>
            <person name="Kyrpides N.C."/>
        </authorList>
    </citation>
    <scope>NUCLEOTIDE SEQUENCE [LARGE SCALE GENOMIC DNA]</scope>
    <source>
        <strain>ATCC 49239 / DSM 5036 / JCM 8891 / ACAM 34</strain>
    </source>
</reference>
<dbReference type="EC" id="4.2.3.5" evidence="1"/>
<dbReference type="EMBL" id="CP001365">
    <property type="protein sequence ID" value="ACM56708.1"/>
    <property type="molecule type" value="Genomic_DNA"/>
</dbReference>
<dbReference type="RefSeq" id="WP_015909855.1">
    <property type="nucleotide sequence ID" value="NC_012029.1"/>
</dbReference>
<dbReference type="SMR" id="B9LMX0"/>
<dbReference type="GeneID" id="7400923"/>
<dbReference type="KEGG" id="hla:Hlac_1114"/>
<dbReference type="eggNOG" id="arCOG04133">
    <property type="taxonomic scope" value="Archaea"/>
</dbReference>
<dbReference type="HOGENOM" id="CLU_034547_0_0_2"/>
<dbReference type="UniPathway" id="UPA00053">
    <property type="reaction ID" value="UER00090"/>
</dbReference>
<dbReference type="Proteomes" id="UP000000740">
    <property type="component" value="Chromosome 1"/>
</dbReference>
<dbReference type="GO" id="GO:0005829">
    <property type="term" value="C:cytosol"/>
    <property type="evidence" value="ECO:0007669"/>
    <property type="project" value="TreeGrafter"/>
</dbReference>
<dbReference type="GO" id="GO:0004107">
    <property type="term" value="F:chorismate synthase activity"/>
    <property type="evidence" value="ECO:0007669"/>
    <property type="project" value="UniProtKB-UniRule"/>
</dbReference>
<dbReference type="GO" id="GO:0010181">
    <property type="term" value="F:FMN binding"/>
    <property type="evidence" value="ECO:0007669"/>
    <property type="project" value="TreeGrafter"/>
</dbReference>
<dbReference type="GO" id="GO:0008652">
    <property type="term" value="P:amino acid biosynthetic process"/>
    <property type="evidence" value="ECO:0007669"/>
    <property type="project" value="UniProtKB-KW"/>
</dbReference>
<dbReference type="GO" id="GO:0009073">
    <property type="term" value="P:aromatic amino acid family biosynthetic process"/>
    <property type="evidence" value="ECO:0007669"/>
    <property type="project" value="UniProtKB-KW"/>
</dbReference>
<dbReference type="GO" id="GO:0009423">
    <property type="term" value="P:chorismate biosynthetic process"/>
    <property type="evidence" value="ECO:0007669"/>
    <property type="project" value="UniProtKB-UniRule"/>
</dbReference>
<dbReference type="CDD" id="cd07304">
    <property type="entry name" value="Chorismate_synthase"/>
    <property type="match status" value="1"/>
</dbReference>
<dbReference type="Gene3D" id="3.60.150.10">
    <property type="entry name" value="Chorismate synthase AroC"/>
    <property type="match status" value="1"/>
</dbReference>
<dbReference type="HAMAP" id="MF_00300">
    <property type="entry name" value="Chorismate_synth"/>
    <property type="match status" value="1"/>
</dbReference>
<dbReference type="InterPro" id="IPR000453">
    <property type="entry name" value="Chorismate_synth"/>
</dbReference>
<dbReference type="InterPro" id="IPR035904">
    <property type="entry name" value="Chorismate_synth_AroC_sf"/>
</dbReference>
<dbReference type="InterPro" id="IPR020541">
    <property type="entry name" value="Chorismate_synthase_CS"/>
</dbReference>
<dbReference type="NCBIfam" id="TIGR00033">
    <property type="entry name" value="aroC"/>
    <property type="match status" value="1"/>
</dbReference>
<dbReference type="NCBIfam" id="NF003793">
    <property type="entry name" value="PRK05382.1"/>
    <property type="match status" value="1"/>
</dbReference>
<dbReference type="PANTHER" id="PTHR21085">
    <property type="entry name" value="CHORISMATE SYNTHASE"/>
    <property type="match status" value="1"/>
</dbReference>
<dbReference type="PANTHER" id="PTHR21085:SF0">
    <property type="entry name" value="CHORISMATE SYNTHASE"/>
    <property type="match status" value="1"/>
</dbReference>
<dbReference type="Pfam" id="PF01264">
    <property type="entry name" value="Chorismate_synt"/>
    <property type="match status" value="1"/>
</dbReference>
<dbReference type="PIRSF" id="PIRSF001456">
    <property type="entry name" value="Chorismate_synth"/>
    <property type="match status" value="1"/>
</dbReference>
<dbReference type="SUPFAM" id="SSF103263">
    <property type="entry name" value="Chorismate synthase, AroC"/>
    <property type="match status" value="1"/>
</dbReference>
<dbReference type="PROSITE" id="PS00787">
    <property type="entry name" value="CHORISMATE_SYNTHASE_1"/>
    <property type="match status" value="1"/>
</dbReference>
<dbReference type="PROSITE" id="PS00788">
    <property type="entry name" value="CHORISMATE_SYNTHASE_2"/>
    <property type="match status" value="1"/>
</dbReference>
<dbReference type="PROSITE" id="PS00789">
    <property type="entry name" value="CHORISMATE_SYNTHASE_3"/>
    <property type="match status" value="1"/>
</dbReference>
<name>AROC_HALLT</name>
<keyword id="KW-0028">Amino-acid biosynthesis</keyword>
<keyword id="KW-0057">Aromatic amino acid biosynthesis</keyword>
<keyword id="KW-0274">FAD</keyword>
<keyword id="KW-0285">Flavoprotein</keyword>
<keyword id="KW-0288">FMN</keyword>
<keyword id="KW-0456">Lyase</keyword>
<keyword id="KW-0521">NADP</keyword>
<keyword id="KW-1185">Reference proteome</keyword>
<feature type="chain" id="PRO_1000132775" description="Chorismate synthase">
    <location>
        <begin position="1"/>
        <end position="395"/>
    </location>
</feature>
<feature type="region of interest" description="Disordered" evidence="2">
    <location>
        <begin position="264"/>
        <end position="292"/>
    </location>
</feature>
<feature type="region of interest" description="Disordered" evidence="2">
    <location>
        <begin position="373"/>
        <end position="395"/>
    </location>
</feature>
<feature type="binding site" evidence="1">
    <location>
        <position position="48"/>
    </location>
    <ligand>
        <name>NADP(+)</name>
        <dbReference type="ChEBI" id="CHEBI:58349"/>
    </ligand>
</feature>
<feature type="binding site" evidence="1">
    <location>
        <begin position="125"/>
        <end position="127"/>
    </location>
    <ligand>
        <name>FMN</name>
        <dbReference type="ChEBI" id="CHEBI:58210"/>
    </ligand>
</feature>
<feature type="binding site" evidence="1">
    <location>
        <position position="298"/>
    </location>
    <ligand>
        <name>FMN</name>
        <dbReference type="ChEBI" id="CHEBI:58210"/>
    </ligand>
</feature>
<feature type="binding site" evidence="1">
    <location>
        <begin position="313"/>
        <end position="317"/>
    </location>
    <ligand>
        <name>FMN</name>
        <dbReference type="ChEBI" id="CHEBI:58210"/>
    </ligand>
</feature>
<feature type="binding site" evidence="1">
    <location>
        <position position="340"/>
    </location>
    <ligand>
        <name>FMN</name>
        <dbReference type="ChEBI" id="CHEBI:58210"/>
    </ligand>
</feature>
<proteinExistence type="inferred from homology"/>